<dbReference type="EC" id="2.6.1.83" evidence="1"/>
<dbReference type="EMBL" id="CP001649">
    <property type="protein sequence ID" value="ACS80012.1"/>
    <property type="molecule type" value="Genomic_DNA"/>
</dbReference>
<dbReference type="RefSeq" id="WP_015851828.1">
    <property type="nucleotide sequence ID" value="NC_012881.1"/>
</dbReference>
<dbReference type="SMR" id="C6BUK3"/>
<dbReference type="STRING" id="526222.Desal_1952"/>
<dbReference type="KEGG" id="dsa:Desal_1952"/>
<dbReference type="eggNOG" id="COG0436">
    <property type="taxonomic scope" value="Bacteria"/>
</dbReference>
<dbReference type="HOGENOM" id="CLU_017584_4_5_7"/>
<dbReference type="OrthoDB" id="9804474at2"/>
<dbReference type="UniPathway" id="UPA00034">
    <property type="reaction ID" value="UER00466"/>
</dbReference>
<dbReference type="Proteomes" id="UP000002601">
    <property type="component" value="Chromosome"/>
</dbReference>
<dbReference type="GO" id="GO:0010285">
    <property type="term" value="F:L,L-diaminopimelate aminotransferase activity"/>
    <property type="evidence" value="ECO:0007669"/>
    <property type="project" value="UniProtKB-EC"/>
</dbReference>
<dbReference type="GO" id="GO:0030170">
    <property type="term" value="F:pyridoxal phosphate binding"/>
    <property type="evidence" value="ECO:0007669"/>
    <property type="project" value="InterPro"/>
</dbReference>
<dbReference type="GO" id="GO:0009089">
    <property type="term" value="P:lysine biosynthetic process via diaminopimelate"/>
    <property type="evidence" value="ECO:0007669"/>
    <property type="project" value="UniProtKB-UniPathway"/>
</dbReference>
<dbReference type="CDD" id="cd00609">
    <property type="entry name" value="AAT_like"/>
    <property type="match status" value="1"/>
</dbReference>
<dbReference type="Gene3D" id="3.90.1150.10">
    <property type="entry name" value="Aspartate Aminotransferase, domain 1"/>
    <property type="match status" value="1"/>
</dbReference>
<dbReference type="Gene3D" id="3.40.640.10">
    <property type="entry name" value="Type I PLP-dependent aspartate aminotransferase-like (Major domain)"/>
    <property type="match status" value="1"/>
</dbReference>
<dbReference type="HAMAP" id="MF_01642">
    <property type="entry name" value="DapL_aminotrans_1"/>
    <property type="match status" value="1"/>
</dbReference>
<dbReference type="InterPro" id="IPR004839">
    <property type="entry name" value="Aminotransferase_I/II_large"/>
</dbReference>
<dbReference type="InterPro" id="IPR019881">
    <property type="entry name" value="DAP-NH2Trfase_DapL_Desulfo"/>
</dbReference>
<dbReference type="InterPro" id="IPR019942">
    <property type="entry name" value="DapL/ALD1"/>
</dbReference>
<dbReference type="InterPro" id="IPR050881">
    <property type="entry name" value="LL-DAP_aminotransferase"/>
</dbReference>
<dbReference type="InterPro" id="IPR015424">
    <property type="entry name" value="PyrdxlP-dep_Trfase"/>
</dbReference>
<dbReference type="InterPro" id="IPR015421">
    <property type="entry name" value="PyrdxlP-dep_Trfase_major"/>
</dbReference>
<dbReference type="InterPro" id="IPR015422">
    <property type="entry name" value="PyrdxlP-dep_Trfase_small"/>
</dbReference>
<dbReference type="NCBIfam" id="TIGR03540">
    <property type="entry name" value="DapC_direct"/>
    <property type="match status" value="1"/>
</dbReference>
<dbReference type="NCBIfam" id="NF006756">
    <property type="entry name" value="PRK09276.1"/>
    <property type="match status" value="1"/>
</dbReference>
<dbReference type="PANTHER" id="PTHR42832">
    <property type="entry name" value="AMINO ACID AMINOTRANSFERASE"/>
    <property type="match status" value="1"/>
</dbReference>
<dbReference type="PANTHER" id="PTHR42832:SF3">
    <property type="entry name" value="L-GLUTAMINE--4-(METHYLSULFANYL)-2-OXOBUTANOATE AMINOTRANSFERASE"/>
    <property type="match status" value="1"/>
</dbReference>
<dbReference type="Pfam" id="PF00155">
    <property type="entry name" value="Aminotran_1_2"/>
    <property type="match status" value="1"/>
</dbReference>
<dbReference type="SUPFAM" id="SSF53383">
    <property type="entry name" value="PLP-dependent transferases"/>
    <property type="match status" value="1"/>
</dbReference>
<keyword id="KW-0032">Aminotransferase</keyword>
<keyword id="KW-0663">Pyridoxal phosphate</keyword>
<keyword id="KW-1185">Reference proteome</keyword>
<keyword id="KW-0808">Transferase</keyword>
<evidence type="ECO:0000255" key="1">
    <source>
        <dbReference type="HAMAP-Rule" id="MF_01642"/>
    </source>
</evidence>
<comment type="function">
    <text evidence="1">Involved in the synthesis of meso-diaminopimelate (m-DAP or DL-DAP), required for both lysine and peptidoglycan biosynthesis. Catalyzes the direct conversion of tetrahydrodipicolinate to LL-diaminopimelate.</text>
</comment>
<comment type="catalytic activity">
    <reaction evidence="1">
        <text>(2S,6S)-2,6-diaminopimelate + 2-oxoglutarate = (S)-2,3,4,5-tetrahydrodipicolinate + L-glutamate + H2O + H(+)</text>
        <dbReference type="Rhea" id="RHEA:23988"/>
        <dbReference type="ChEBI" id="CHEBI:15377"/>
        <dbReference type="ChEBI" id="CHEBI:15378"/>
        <dbReference type="ChEBI" id="CHEBI:16810"/>
        <dbReference type="ChEBI" id="CHEBI:16845"/>
        <dbReference type="ChEBI" id="CHEBI:29985"/>
        <dbReference type="ChEBI" id="CHEBI:57609"/>
        <dbReference type="EC" id="2.6.1.83"/>
    </reaction>
</comment>
<comment type="cofactor">
    <cofactor evidence="1">
        <name>pyridoxal 5'-phosphate</name>
        <dbReference type="ChEBI" id="CHEBI:597326"/>
    </cofactor>
</comment>
<comment type="pathway">
    <text evidence="1">Amino-acid biosynthesis; L-lysine biosynthesis via DAP pathway; LL-2,6-diaminopimelate from (S)-tetrahydrodipicolinate (aminotransferase route): step 1/1.</text>
</comment>
<comment type="subunit">
    <text evidence="1">Homodimer.</text>
</comment>
<comment type="similarity">
    <text evidence="1">Belongs to the class-I pyridoxal-phosphate-dependent aminotransferase family. LL-diaminopimelate aminotransferase subfamily.</text>
</comment>
<organism>
    <name type="scientific">Maridesulfovibrio salexigens (strain ATCC 14822 / DSM 2638 / NCIMB 8403 / VKM B-1763)</name>
    <name type="common">Desulfovibrio salexigens</name>
    <dbReference type="NCBI Taxonomy" id="526222"/>
    <lineage>
        <taxon>Bacteria</taxon>
        <taxon>Pseudomonadati</taxon>
        <taxon>Thermodesulfobacteriota</taxon>
        <taxon>Desulfovibrionia</taxon>
        <taxon>Desulfovibrionales</taxon>
        <taxon>Desulfovibrionaceae</taxon>
        <taxon>Maridesulfovibrio</taxon>
    </lineage>
</organism>
<name>DAPAT_MARSD</name>
<gene>
    <name evidence="1" type="primary">dapL</name>
    <name type="ordered locus">Desal_1952</name>
</gene>
<feature type="chain" id="PRO_1000215828" description="LL-diaminopimelate aminotransferase">
    <location>
        <begin position="1"/>
        <end position="388"/>
    </location>
</feature>
<feature type="binding site" evidence="1">
    <location>
        <position position="16"/>
    </location>
    <ligand>
        <name>substrate</name>
    </ligand>
</feature>
<feature type="binding site" evidence="1">
    <location>
        <position position="41"/>
    </location>
    <ligand>
        <name>substrate</name>
    </ligand>
</feature>
<feature type="binding site" evidence="1">
    <location>
        <position position="70"/>
    </location>
    <ligand>
        <name>pyridoxal 5'-phosphate</name>
        <dbReference type="ChEBI" id="CHEBI:597326"/>
    </ligand>
</feature>
<feature type="binding site" evidence="1">
    <location>
        <begin position="104"/>
        <end position="105"/>
    </location>
    <ligand>
        <name>pyridoxal 5'-phosphate</name>
        <dbReference type="ChEBI" id="CHEBI:597326"/>
    </ligand>
</feature>
<feature type="binding site" evidence="1">
    <location>
        <position position="105"/>
    </location>
    <ligand>
        <name>substrate</name>
    </ligand>
</feature>
<feature type="binding site" evidence="1">
    <location>
        <position position="129"/>
    </location>
    <ligand>
        <name>pyridoxal 5'-phosphate</name>
        <dbReference type="ChEBI" id="CHEBI:597326"/>
    </ligand>
</feature>
<feature type="binding site" evidence="1">
    <location>
        <position position="129"/>
    </location>
    <ligand>
        <name>substrate</name>
    </ligand>
</feature>
<feature type="binding site" evidence="1">
    <location>
        <position position="179"/>
    </location>
    <ligand>
        <name>pyridoxal 5'-phosphate</name>
        <dbReference type="ChEBI" id="CHEBI:597326"/>
    </ligand>
</feature>
<feature type="binding site" evidence="1">
    <location>
        <position position="179"/>
    </location>
    <ligand>
        <name>substrate</name>
    </ligand>
</feature>
<feature type="binding site" evidence="1">
    <location>
        <position position="210"/>
    </location>
    <ligand>
        <name>pyridoxal 5'-phosphate</name>
        <dbReference type="ChEBI" id="CHEBI:597326"/>
    </ligand>
</feature>
<feature type="binding site" evidence="1">
    <location>
        <begin position="239"/>
        <end position="241"/>
    </location>
    <ligand>
        <name>pyridoxal 5'-phosphate</name>
        <dbReference type="ChEBI" id="CHEBI:597326"/>
    </ligand>
</feature>
<feature type="binding site" evidence="1">
    <location>
        <position position="250"/>
    </location>
    <ligand>
        <name>pyridoxal 5'-phosphate</name>
        <dbReference type="ChEBI" id="CHEBI:597326"/>
    </ligand>
</feature>
<feature type="binding site" evidence="1">
    <location>
        <position position="368"/>
    </location>
    <ligand>
        <name>substrate</name>
    </ligand>
</feature>
<feature type="modified residue" description="N6-(pyridoxal phosphate)lysine" evidence="1">
    <location>
        <position position="242"/>
    </location>
</feature>
<sequence>MPEFKLADRLATLPPYLFAEIDRLKAEVAAQGVDIISLGIGDPDLPTPDFIIEALHKAAKNPVNHQYPSYVGLLTFRQAVADWYKERFDVELDATKEVVSLIGSKEGIAHFPLAFVNPGDLVLVASPNYPVYPVASGFAGGEVEIVPLLEENDFLPNLDAISDEKWDKCKIFFVNYPNNPTSATATPEFYAELVAKAKKHNVIIAADAAYTEVYYDEDKKPISILETPGAKDVAIEFHSLSKTYNMTGWRCGMAVGNASLVAGLGKIKENVDSGIFQAVQEAGIVALKEGEPYVKEFRKIYKERRDCVIEALEKINISCKVPDASIFVWAKTPEGYTSSEFVSKLLKETGVVVTPGNGFGESGEGYFRISLTVDTDRLKEAVSRISKL</sequence>
<reference key="1">
    <citation type="submission" date="2009-06" db="EMBL/GenBank/DDBJ databases">
        <title>Complete sequence of Desulfovibrio salexigens DSM 2638.</title>
        <authorList>
            <consortium name="US DOE Joint Genome Institute"/>
            <person name="Lucas S."/>
            <person name="Copeland A."/>
            <person name="Lapidus A."/>
            <person name="Glavina del Rio T."/>
            <person name="Tice H."/>
            <person name="Bruce D."/>
            <person name="Goodwin L."/>
            <person name="Pitluck S."/>
            <person name="Munk A.C."/>
            <person name="Brettin T."/>
            <person name="Detter J.C."/>
            <person name="Han C."/>
            <person name="Tapia R."/>
            <person name="Larimer F."/>
            <person name="Land M."/>
            <person name="Hauser L."/>
            <person name="Kyrpides N."/>
            <person name="Anderson I."/>
            <person name="Wall J.D."/>
            <person name="Arkin A.P."/>
            <person name="Dehal P."/>
            <person name="Chivian D."/>
            <person name="Giles B."/>
            <person name="Hazen T.C."/>
        </authorList>
    </citation>
    <scope>NUCLEOTIDE SEQUENCE [LARGE SCALE GENOMIC DNA]</scope>
    <source>
        <strain>ATCC 14822 / DSM 2638 / NCIMB 8403 / VKM B-1763</strain>
    </source>
</reference>
<accession>C6BUK3</accession>
<protein>
    <recommendedName>
        <fullName evidence="1">LL-diaminopimelate aminotransferase</fullName>
        <shortName evidence="1">DAP-AT</shortName>
        <shortName evidence="1">DAP-aminotransferase</shortName>
        <shortName evidence="1">LL-DAP-aminotransferase</shortName>
        <ecNumber evidence="1">2.6.1.83</ecNumber>
    </recommendedName>
</protein>
<proteinExistence type="inferred from homology"/>